<reference key="1">
    <citation type="journal article" date="2007" name="BMC Genomics">
        <title>Comparative chloroplast genomics: analyses including new sequences from the angiosperms Nuphar advena and Ranunculus macranthus.</title>
        <authorList>
            <person name="Raubeson L.A."/>
            <person name="Peery R."/>
            <person name="Chumley T.W."/>
            <person name="Dziubek C."/>
            <person name="Fourcade H.M."/>
            <person name="Boore J.L."/>
            <person name="Jansen R.K."/>
        </authorList>
    </citation>
    <scope>NUCLEOTIDE SEQUENCE [LARGE SCALE GENOMIC DNA]</scope>
</reference>
<feature type="chain" id="PRO_0000359165" description="Acetyl-coenzyme A carboxylase carboxyl transferase subunit beta, chloroplastic">
    <location>
        <begin position="1"/>
        <end position="496"/>
    </location>
</feature>
<feature type="domain" description="CoA carboxyltransferase N-terminal" evidence="3">
    <location>
        <begin position="229"/>
        <end position="496"/>
    </location>
</feature>
<feature type="zinc finger region" description="C4-type" evidence="2">
    <location>
        <begin position="233"/>
        <end position="255"/>
    </location>
</feature>
<feature type="binding site" evidence="2">
    <location>
        <position position="233"/>
    </location>
    <ligand>
        <name>Zn(2+)</name>
        <dbReference type="ChEBI" id="CHEBI:29105"/>
    </ligand>
</feature>
<feature type="binding site" evidence="2">
    <location>
        <position position="236"/>
    </location>
    <ligand>
        <name>Zn(2+)</name>
        <dbReference type="ChEBI" id="CHEBI:29105"/>
    </ligand>
</feature>
<feature type="binding site" evidence="2">
    <location>
        <position position="252"/>
    </location>
    <ligand>
        <name>Zn(2+)</name>
        <dbReference type="ChEBI" id="CHEBI:29105"/>
    </ligand>
</feature>
<feature type="binding site" evidence="2">
    <location>
        <position position="255"/>
    </location>
    <ligand>
        <name>Zn(2+)</name>
        <dbReference type="ChEBI" id="CHEBI:29105"/>
    </ligand>
</feature>
<protein>
    <recommendedName>
        <fullName evidence="2">Acetyl-coenzyme A carboxylase carboxyl transferase subunit beta, chloroplastic</fullName>
        <shortName evidence="2">ACCase subunit beta</shortName>
        <shortName evidence="2">Acetyl-CoA carboxylase carboxyltransferase subunit beta</shortName>
        <ecNumber evidence="2">2.1.3.15</ecNumber>
    </recommendedName>
</protein>
<keyword id="KW-0067">ATP-binding</keyword>
<keyword id="KW-0150">Chloroplast</keyword>
<keyword id="KW-0275">Fatty acid biosynthesis</keyword>
<keyword id="KW-0276">Fatty acid metabolism</keyword>
<keyword id="KW-0444">Lipid biosynthesis</keyword>
<keyword id="KW-0443">Lipid metabolism</keyword>
<keyword id="KW-0479">Metal-binding</keyword>
<keyword id="KW-0547">Nucleotide-binding</keyword>
<keyword id="KW-0934">Plastid</keyword>
<keyword id="KW-0808">Transferase</keyword>
<keyword id="KW-0862">Zinc</keyword>
<keyword id="KW-0863">Zinc-finger</keyword>
<dbReference type="EC" id="2.1.3.15" evidence="2"/>
<dbReference type="EMBL" id="DQ359689">
    <property type="protein sequence ID" value="ABC70765.1"/>
    <property type="molecule type" value="Genomic_DNA"/>
</dbReference>
<dbReference type="RefSeq" id="YP_001004195.1">
    <property type="nucleotide sequence ID" value="NC_008796.1"/>
</dbReference>
<dbReference type="SMR" id="A1XGP7"/>
<dbReference type="GeneID" id="4712122"/>
<dbReference type="UniPathway" id="UPA00655">
    <property type="reaction ID" value="UER00711"/>
</dbReference>
<dbReference type="GO" id="GO:0009317">
    <property type="term" value="C:acetyl-CoA carboxylase complex"/>
    <property type="evidence" value="ECO:0007669"/>
    <property type="project" value="InterPro"/>
</dbReference>
<dbReference type="GO" id="GO:0009570">
    <property type="term" value="C:chloroplast stroma"/>
    <property type="evidence" value="ECO:0007669"/>
    <property type="project" value="UniProtKB-SubCell"/>
</dbReference>
<dbReference type="GO" id="GO:0003989">
    <property type="term" value="F:acetyl-CoA carboxylase activity"/>
    <property type="evidence" value="ECO:0007669"/>
    <property type="project" value="InterPro"/>
</dbReference>
<dbReference type="GO" id="GO:0005524">
    <property type="term" value="F:ATP binding"/>
    <property type="evidence" value="ECO:0007669"/>
    <property type="project" value="UniProtKB-KW"/>
</dbReference>
<dbReference type="GO" id="GO:0016743">
    <property type="term" value="F:carboxyl- or carbamoyltransferase activity"/>
    <property type="evidence" value="ECO:0007669"/>
    <property type="project" value="UniProtKB-UniRule"/>
</dbReference>
<dbReference type="GO" id="GO:0008270">
    <property type="term" value="F:zinc ion binding"/>
    <property type="evidence" value="ECO:0007669"/>
    <property type="project" value="UniProtKB-UniRule"/>
</dbReference>
<dbReference type="GO" id="GO:0006633">
    <property type="term" value="P:fatty acid biosynthetic process"/>
    <property type="evidence" value="ECO:0007669"/>
    <property type="project" value="UniProtKB-KW"/>
</dbReference>
<dbReference type="GO" id="GO:2001295">
    <property type="term" value="P:malonyl-CoA biosynthetic process"/>
    <property type="evidence" value="ECO:0007669"/>
    <property type="project" value="UniProtKB-UniRule"/>
</dbReference>
<dbReference type="Gene3D" id="3.90.226.10">
    <property type="entry name" value="2-enoyl-CoA Hydratase, Chain A, domain 1"/>
    <property type="match status" value="1"/>
</dbReference>
<dbReference type="HAMAP" id="MF_01395">
    <property type="entry name" value="AcetylCoA_CT_beta"/>
    <property type="match status" value="1"/>
</dbReference>
<dbReference type="InterPro" id="IPR034733">
    <property type="entry name" value="AcCoA_carboxyl_beta"/>
</dbReference>
<dbReference type="InterPro" id="IPR000438">
    <property type="entry name" value="Acetyl_CoA_COase_Trfase_b_su"/>
</dbReference>
<dbReference type="InterPro" id="IPR029045">
    <property type="entry name" value="ClpP/crotonase-like_dom_sf"/>
</dbReference>
<dbReference type="InterPro" id="IPR011762">
    <property type="entry name" value="COA_CT_N"/>
</dbReference>
<dbReference type="NCBIfam" id="TIGR00515">
    <property type="entry name" value="accD"/>
    <property type="match status" value="1"/>
</dbReference>
<dbReference type="PANTHER" id="PTHR42995">
    <property type="entry name" value="ACETYL-COENZYME A CARBOXYLASE CARBOXYL TRANSFERASE SUBUNIT BETA, CHLOROPLASTIC"/>
    <property type="match status" value="1"/>
</dbReference>
<dbReference type="PANTHER" id="PTHR42995:SF5">
    <property type="entry name" value="ACETYL-COENZYME A CARBOXYLASE CARBOXYL TRANSFERASE SUBUNIT BETA, CHLOROPLASTIC"/>
    <property type="match status" value="1"/>
</dbReference>
<dbReference type="Pfam" id="PF01039">
    <property type="entry name" value="Carboxyl_trans"/>
    <property type="match status" value="1"/>
</dbReference>
<dbReference type="PRINTS" id="PR01070">
    <property type="entry name" value="ACCCTRFRASEB"/>
</dbReference>
<dbReference type="SUPFAM" id="SSF52096">
    <property type="entry name" value="ClpP/crotonase"/>
    <property type="match status" value="1"/>
</dbReference>
<dbReference type="PROSITE" id="PS50980">
    <property type="entry name" value="COA_CT_NTER"/>
    <property type="match status" value="1"/>
</dbReference>
<geneLocation type="chloroplast"/>
<proteinExistence type="inferred from homology"/>
<evidence type="ECO:0000250" key="1"/>
<evidence type="ECO:0000255" key="2">
    <source>
        <dbReference type="HAMAP-Rule" id="MF_01395"/>
    </source>
</evidence>
<evidence type="ECO:0000255" key="3">
    <source>
        <dbReference type="PROSITE-ProRule" id="PRU01136"/>
    </source>
</evidence>
<name>ACCD_RANMC</name>
<comment type="function">
    <text evidence="2">Component of the acetyl coenzyme A carboxylase (ACC) complex. Biotin carboxylase (BC) catalyzes the carboxylation of biotin on its carrier protein (BCCP) and then the CO(2) group is transferred by the transcarboxylase to acetyl-CoA to form malonyl-CoA.</text>
</comment>
<comment type="catalytic activity">
    <reaction evidence="2">
        <text>N(6)-carboxybiotinyl-L-lysyl-[protein] + acetyl-CoA = N(6)-biotinyl-L-lysyl-[protein] + malonyl-CoA</text>
        <dbReference type="Rhea" id="RHEA:54728"/>
        <dbReference type="Rhea" id="RHEA-COMP:10505"/>
        <dbReference type="Rhea" id="RHEA-COMP:10506"/>
        <dbReference type="ChEBI" id="CHEBI:57288"/>
        <dbReference type="ChEBI" id="CHEBI:57384"/>
        <dbReference type="ChEBI" id="CHEBI:83144"/>
        <dbReference type="ChEBI" id="CHEBI:83145"/>
        <dbReference type="EC" id="2.1.3.15"/>
    </reaction>
</comment>
<comment type="cofactor">
    <cofactor evidence="2">
        <name>Zn(2+)</name>
        <dbReference type="ChEBI" id="CHEBI:29105"/>
    </cofactor>
    <text evidence="2">Binds 1 zinc ion per subunit.</text>
</comment>
<comment type="pathway">
    <text evidence="2">Lipid metabolism; malonyl-CoA biosynthesis; malonyl-CoA from acetyl-CoA: step 1/1.</text>
</comment>
<comment type="subunit">
    <text evidence="1">Acetyl-CoA carboxylase is a heterohexamer composed of biotin carboxyl carrier protein, biotin carboxylase and 2 subunits each of ACCase subunit alpha and ACCase plastid-coded subunit beta (accD).</text>
</comment>
<comment type="subcellular location">
    <subcellularLocation>
        <location evidence="2">Plastid</location>
        <location evidence="2">Chloroplast stroma</location>
    </subcellularLocation>
</comment>
<comment type="similarity">
    <text evidence="2">Belongs to the AccD/PCCB family.</text>
</comment>
<sequence>MEKWRFNSMLSKEELEHQCGLSKSLKCTGSIGNTNGGEDLAINNMIRGWVDSDNSSNIDHLVGVSNIRSLISDDTFLVRDSNGKNYSIYFDIENQIFEIEIEGDRSFLSELESFFSSYLNLNYSYPNDGSKSDNHYYDRSMYDTQYSWNNYITSCIENYLRSEIHIDSYISSSSDNYSKSYISNYVCSGGGLNSTDSESFSIQTSANGSTFDMIGKFKNFDISPKYSHLWVQCENCYGLNYKKFFRLKLHICEQCGYHLKMSSSERIEILIDPGTWDAMDEDMVSVDPIEFHSEEEPYKDRIDSYQKKTGLTEAVQTGIGQLNGISIAIGVMDFQFMGGSMGSVVGEKITRLIEYATNGFLPLIIVCASGGARMQEGSLSLMQMAKISSASYDYQSNKKLFYVSILTSPTTGGVTASFGMLGDIIIAEPNAYIAFAGKRVIEQTLNKTVPDGSQEAEYLFQKGLFDLIVPRNLLKGVLSELFQLHGFFPLNKNFIK</sequence>
<organism>
    <name type="scientific">Ranunculus macranthus</name>
    <name type="common">Large buttercup</name>
    <dbReference type="NCBI Taxonomy" id="334596"/>
    <lineage>
        <taxon>Eukaryota</taxon>
        <taxon>Viridiplantae</taxon>
        <taxon>Streptophyta</taxon>
        <taxon>Embryophyta</taxon>
        <taxon>Tracheophyta</taxon>
        <taxon>Spermatophyta</taxon>
        <taxon>Magnoliopsida</taxon>
        <taxon>Ranunculales</taxon>
        <taxon>Ranunculaceae</taxon>
        <taxon>Ranunculoideae</taxon>
        <taxon>Ranunculeae</taxon>
        <taxon>Ranunculus</taxon>
    </lineage>
</organism>
<gene>
    <name evidence="2" type="primary">accD</name>
</gene>
<accession>A1XGP7</accession>